<organism>
    <name type="scientific">Xenopus tropicalis</name>
    <name type="common">Western clawed frog</name>
    <name type="synonym">Silurana tropicalis</name>
    <dbReference type="NCBI Taxonomy" id="8364"/>
    <lineage>
        <taxon>Eukaryota</taxon>
        <taxon>Metazoa</taxon>
        <taxon>Chordata</taxon>
        <taxon>Craniata</taxon>
        <taxon>Vertebrata</taxon>
        <taxon>Euteleostomi</taxon>
        <taxon>Amphibia</taxon>
        <taxon>Batrachia</taxon>
        <taxon>Anura</taxon>
        <taxon>Pipoidea</taxon>
        <taxon>Pipidae</taxon>
        <taxon>Xenopodinae</taxon>
        <taxon>Xenopus</taxon>
        <taxon>Silurana</taxon>
    </lineage>
</organism>
<comment type="function">
    <text evidence="1">Involved in the biogenesis of the 60S ribosomal subunit in the nucleus.</text>
</comment>
<comment type="subunit">
    <text evidence="1">Associates with pre-60S ribosomal particles.</text>
</comment>
<comment type="subcellular location">
    <subcellularLocation>
        <location evidence="1">Nucleus</location>
    </subcellularLocation>
</comment>
<comment type="similarity">
    <text evidence="3">Belongs to the TMA16 family.</text>
</comment>
<dbReference type="EMBL" id="BC135799">
    <property type="protein sequence ID" value="AAI35800.1"/>
    <property type="molecule type" value="mRNA"/>
</dbReference>
<dbReference type="RefSeq" id="NP_001016631.1">
    <property type="nucleotide sequence ID" value="NM_001016631.3"/>
</dbReference>
<dbReference type="SMR" id="A4II15"/>
<dbReference type="FunCoup" id="A4II15">
    <property type="interactions" value="2573"/>
</dbReference>
<dbReference type="STRING" id="8364.ENSXETP00000029605"/>
<dbReference type="PaxDb" id="8364-ENSXETP00000010618"/>
<dbReference type="DNASU" id="549385"/>
<dbReference type="GeneID" id="549385"/>
<dbReference type="KEGG" id="xtr:549385"/>
<dbReference type="AGR" id="Xenbase:XB-GENE-1015317"/>
<dbReference type="CTD" id="55319"/>
<dbReference type="Xenbase" id="XB-GENE-1015317">
    <property type="gene designation" value="tma16"/>
</dbReference>
<dbReference type="eggNOG" id="ENOG502RXYZ">
    <property type="taxonomic scope" value="Eukaryota"/>
</dbReference>
<dbReference type="HOGENOM" id="CLU_105581_1_0_1"/>
<dbReference type="InParanoid" id="A4II15"/>
<dbReference type="OrthoDB" id="270284at2759"/>
<dbReference type="TreeFam" id="TF324892"/>
<dbReference type="Proteomes" id="UP000008143">
    <property type="component" value="Chromosome 1"/>
</dbReference>
<dbReference type="Bgee" id="ENSXETG00000004891">
    <property type="expression patterns" value="Expressed in testis and 13 other cell types or tissues"/>
</dbReference>
<dbReference type="GO" id="GO:0005634">
    <property type="term" value="C:nucleus"/>
    <property type="evidence" value="ECO:0007669"/>
    <property type="project" value="UniProtKB-SubCell"/>
</dbReference>
<dbReference type="GO" id="GO:1990275">
    <property type="term" value="F:preribosome binding"/>
    <property type="evidence" value="ECO:0000250"/>
    <property type="project" value="UniProtKB"/>
</dbReference>
<dbReference type="GO" id="GO:0042273">
    <property type="term" value="P:ribosomal large subunit biogenesis"/>
    <property type="evidence" value="ECO:0000250"/>
    <property type="project" value="UniProtKB"/>
</dbReference>
<dbReference type="FunFam" id="1.20.1440.170:FF:000001">
    <property type="entry name" value="Translation machinery-associated 16 homolog"/>
    <property type="match status" value="1"/>
</dbReference>
<dbReference type="Gene3D" id="1.20.1440.170">
    <property type="entry name" value="Translation machinery-associated protein 16-like"/>
    <property type="match status" value="1"/>
</dbReference>
<dbReference type="InterPro" id="IPR021346">
    <property type="entry name" value="Tma16"/>
</dbReference>
<dbReference type="InterPro" id="IPR038356">
    <property type="entry name" value="Tma16_sf"/>
</dbReference>
<dbReference type="PANTHER" id="PTHR13349">
    <property type="entry name" value="TRANSLATION MACHINERY-ASSOCIATED PROTEIN 16"/>
    <property type="match status" value="1"/>
</dbReference>
<dbReference type="PANTHER" id="PTHR13349:SF2">
    <property type="entry name" value="TRANSLATION MACHINERY-ASSOCIATED PROTEIN 16"/>
    <property type="match status" value="1"/>
</dbReference>
<dbReference type="Pfam" id="PF11176">
    <property type="entry name" value="Tma16"/>
    <property type="match status" value="1"/>
</dbReference>
<accession>A4II15</accession>
<sequence length="197" mass="23166">MPKAPPNKNKQEKKVIHPYSRKAAQLTREAHKQDRKDRLKNEKALRLSIIGEKLQWFQSHLNPEKEEYTKKEACELIESYLHRFDSELEQIELHNNIKGRQTRRHGSRETVIKQTIERERQLYSGYGIEIPDIVNSKNLKVFRDWDLDMKKLPNIKMRKISISDLLSKSGKEVQGGNEETEDKLESNDESLSDVQES</sequence>
<proteinExistence type="evidence at transcript level"/>
<protein>
    <recommendedName>
        <fullName>Translation machinery-associated protein 16</fullName>
    </recommendedName>
</protein>
<gene>
    <name type="primary">tma16</name>
</gene>
<name>TMA16_XENTR</name>
<evidence type="ECO:0000250" key="1">
    <source>
        <dbReference type="UniProtKB" id="Q96EY4"/>
    </source>
</evidence>
<evidence type="ECO:0000256" key="2">
    <source>
        <dbReference type="SAM" id="MobiDB-lite"/>
    </source>
</evidence>
<evidence type="ECO:0000305" key="3"/>
<keyword id="KW-0539">Nucleus</keyword>
<keyword id="KW-1185">Reference proteome</keyword>
<keyword id="KW-0690">Ribosome biogenesis</keyword>
<feature type="chain" id="PRO_0000321563" description="Translation machinery-associated protein 16">
    <location>
        <begin position="1"/>
        <end position="197"/>
    </location>
</feature>
<feature type="region of interest" description="Disordered" evidence="2">
    <location>
        <begin position="1"/>
        <end position="38"/>
    </location>
</feature>
<feature type="region of interest" description="Disordered" evidence="2">
    <location>
        <begin position="168"/>
        <end position="197"/>
    </location>
</feature>
<feature type="compositionally biased region" description="Basic and acidic residues" evidence="2">
    <location>
        <begin position="28"/>
        <end position="38"/>
    </location>
</feature>
<feature type="compositionally biased region" description="Acidic residues" evidence="2">
    <location>
        <begin position="178"/>
        <end position="197"/>
    </location>
</feature>
<reference key="1">
    <citation type="submission" date="2007-03" db="EMBL/GenBank/DDBJ databases">
        <authorList>
            <consortium name="NIH - Xenopus Gene Collection (XGC) project"/>
        </authorList>
    </citation>
    <scope>NUCLEOTIDE SEQUENCE [LARGE SCALE MRNA]</scope>
    <source>
        <tissue>Embryo</tissue>
    </source>
</reference>